<dbReference type="EMBL" id="CR382126">
    <property type="protein sequence ID" value="CAG98455.1"/>
    <property type="molecule type" value="Genomic_DNA"/>
</dbReference>
<dbReference type="RefSeq" id="XP_455747.1">
    <property type="nucleotide sequence ID" value="XM_455747.1"/>
</dbReference>
<dbReference type="SMR" id="Q6CJZ2"/>
<dbReference type="FunCoup" id="Q6CJZ2">
    <property type="interactions" value="272"/>
</dbReference>
<dbReference type="STRING" id="284590.Q6CJZ2"/>
<dbReference type="PaxDb" id="284590-Q6CJZ2"/>
<dbReference type="KEGG" id="kla:KLLA0_F14839g"/>
<dbReference type="eggNOG" id="KOG2149">
    <property type="taxonomic scope" value="Eukaryota"/>
</dbReference>
<dbReference type="HOGENOM" id="CLU_050252_2_0_1"/>
<dbReference type="InParanoid" id="Q6CJZ2"/>
<dbReference type="OMA" id="CAGGWVK"/>
<dbReference type="Proteomes" id="UP000000598">
    <property type="component" value="Chromosome F"/>
</dbReference>
<dbReference type="GO" id="GO:0005634">
    <property type="term" value="C:nucleus"/>
    <property type="evidence" value="ECO:0007669"/>
    <property type="project" value="UniProtKB-SubCell"/>
</dbReference>
<dbReference type="GO" id="GO:0120330">
    <property type="term" value="C:rixosome complex"/>
    <property type="evidence" value="ECO:0007669"/>
    <property type="project" value="TreeGrafter"/>
</dbReference>
<dbReference type="GO" id="GO:0006364">
    <property type="term" value="P:rRNA processing"/>
    <property type="evidence" value="ECO:0007669"/>
    <property type="project" value="UniProtKB-KW"/>
</dbReference>
<dbReference type="InterPro" id="IPR016024">
    <property type="entry name" value="ARM-type_fold"/>
</dbReference>
<dbReference type="InterPro" id="IPR024679">
    <property type="entry name" value="Ipi1_N"/>
</dbReference>
<dbReference type="PANTHER" id="PTHR16056">
    <property type="entry name" value="REGULATOR OF MICROTUBULE DYNAMICS PROTEIN"/>
    <property type="match status" value="1"/>
</dbReference>
<dbReference type="PANTHER" id="PTHR16056:SF2">
    <property type="entry name" value="TESTIS-EXPRESSED PROTEIN 10"/>
    <property type="match status" value="1"/>
</dbReference>
<dbReference type="Pfam" id="PF12333">
    <property type="entry name" value="Ipi1_N"/>
    <property type="match status" value="1"/>
</dbReference>
<dbReference type="SUPFAM" id="SSF48371">
    <property type="entry name" value="ARM repeat"/>
    <property type="match status" value="1"/>
</dbReference>
<keyword id="KW-0539">Nucleus</keyword>
<keyword id="KW-1185">Reference proteome</keyword>
<keyword id="KW-0690">Ribosome biogenesis</keyword>
<keyword id="KW-0698">rRNA processing</keyword>
<sequence length="381" mass="42601">MAKKTVRQQDFMKRKLKVGKPKQKPSNVTDTSFQMKRISLPSQTKISSGSNGKSAGNGTGVLDLNQEVIKRVSLLRHHSDVTRKETVLYFESMISRIIHLPSMNNLMQSSIPLMCDSSKQVRDELANLLDTIGKHDANVLKLQIRAITLYLNNAMTHIIAPIQRDSGMFVQVVLKYCADELVRHAWIKMLKGFFQVLGWTIVTQGNNKAKGKSISMGITSSSVLSMNKNKKHKNENLKAMLQFIRAGVLGAAAIGHEDRNPEQGNGANSVSPLLQQRYVPYMIPEFPQPYAYLKLFTRQFAKGELTSTGAETSSTDSGNMTLEELETLSCEDTHTRRMVFNQHFYPSIQRQLPALIKDGGECGRTAHSFSSTLEEILQITV</sequence>
<feature type="chain" id="PRO_0000308721" description="Pre-rRNA-processing protein IPI1">
    <location>
        <begin position="1"/>
        <end position="381"/>
    </location>
</feature>
<feature type="region of interest" description="Disordered" evidence="2">
    <location>
        <begin position="1"/>
        <end position="32"/>
    </location>
</feature>
<feature type="compositionally biased region" description="Basic residues" evidence="2">
    <location>
        <begin position="14"/>
        <end position="23"/>
    </location>
</feature>
<accession>Q6CJZ2</accession>
<name>IPI1_KLULA</name>
<evidence type="ECO:0000250" key="1">
    <source>
        <dbReference type="UniProtKB" id="P38803"/>
    </source>
</evidence>
<evidence type="ECO:0000256" key="2">
    <source>
        <dbReference type="SAM" id="MobiDB-lite"/>
    </source>
</evidence>
<evidence type="ECO:0000305" key="3"/>
<protein>
    <recommendedName>
        <fullName>Pre-rRNA-processing protein IPI1</fullName>
    </recommendedName>
</protein>
<organism>
    <name type="scientific">Kluyveromyces lactis (strain ATCC 8585 / CBS 2359 / DSM 70799 / NBRC 1267 / NRRL Y-1140 / WM37)</name>
    <name type="common">Yeast</name>
    <name type="synonym">Candida sphaerica</name>
    <dbReference type="NCBI Taxonomy" id="284590"/>
    <lineage>
        <taxon>Eukaryota</taxon>
        <taxon>Fungi</taxon>
        <taxon>Dikarya</taxon>
        <taxon>Ascomycota</taxon>
        <taxon>Saccharomycotina</taxon>
        <taxon>Saccharomycetes</taxon>
        <taxon>Saccharomycetales</taxon>
        <taxon>Saccharomycetaceae</taxon>
        <taxon>Kluyveromyces</taxon>
    </lineage>
</organism>
<proteinExistence type="inferred from homology"/>
<reference key="1">
    <citation type="journal article" date="2004" name="Nature">
        <title>Genome evolution in yeasts.</title>
        <authorList>
            <person name="Dujon B."/>
            <person name="Sherman D."/>
            <person name="Fischer G."/>
            <person name="Durrens P."/>
            <person name="Casaregola S."/>
            <person name="Lafontaine I."/>
            <person name="de Montigny J."/>
            <person name="Marck C."/>
            <person name="Neuveglise C."/>
            <person name="Talla E."/>
            <person name="Goffard N."/>
            <person name="Frangeul L."/>
            <person name="Aigle M."/>
            <person name="Anthouard V."/>
            <person name="Babour A."/>
            <person name="Barbe V."/>
            <person name="Barnay S."/>
            <person name="Blanchin S."/>
            <person name="Beckerich J.-M."/>
            <person name="Beyne E."/>
            <person name="Bleykasten C."/>
            <person name="Boisrame A."/>
            <person name="Boyer J."/>
            <person name="Cattolico L."/>
            <person name="Confanioleri F."/>
            <person name="de Daruvar A."/>
            <person name="Despons L."/>
            <person name="Fabre E."/>
            <person name="Fairhead C."/>
            <person name="Ferry-Dumazet H."/>
            <person name="Groppi A."/>
            <person name="Hantraye F."/>
            <person name="Hennequin C."/>
            <person name="Jauniaux N."/>
            <person name="Joyet P."/>
            <person name="Kachouri R."/>
            <person name="Kerrest A."/>
            <person name="Koszul R."/>
            <person name="Lemaire M."/>
            <person name="Lesur I."/>
            <person name="Ma L."/>
            <person name="Muller H."/>
            <person name="Nicaud J.-M."/>
            <person name="Nikolski M."/>
            <person name="Oztas S."/>
            <person name="Ozier-Kalogeropoulos O."/>
            <person name="Pellenz S."/>
            <person name="Potier S."/>
            <person name="Richard G.-F."/>
            <person name="Straub M.-L."/>
            <person name="Suleau A."/>
            <person name="Swennen D."/>
            <person name="Tekaia F."/>
            <person name="Wesolowski-Louvel M."/>
            <person name="Westhof E."/>
            <person name="Wirth B."/>
            <person name="Zeniou-Meyer M."/>
            <person name="Zivanovic Y."/>
            <person name="Bolotin-Fukuhara M."/>
            <person name="Thierry A."/>
            <person name="Bouchier C."/>
            <person name="Caudron B."/>
            <person name="Scarpelli C."/>
            <person name="Gaillardin C."/>
            <person name="Weissenbach J."/>
            <person name="Wincker P."/>
            <person name="Souciet J.-L."/>
        </authorList>
    </citation>
    <scope>NUCLEOTIDE SEQUENCE [LARGE SCALE GENOMIC DNA]</scope>
    <source>
        <strain>ATCC 8585 / CBS 2359 / DSM 70799 / NBRC 1267 / NRRL Y-1140 / WM37</strain>
    </source>
</reference>
<gene>
    <name type="primary">IPI1</name>
    <name type="ordered locus">KLLA0F14839g</name>
</gene>
<comment type="function">
    <text evidence="1">Component of the RIX1 complex required for processing of ITS2 sequences from 35S pre-rRNA.</text>
</comment>
<comment type="subunit">
    <text evidence="1">Component of the RIX1 complex, composed of IPI1, RIX1/IPI2 and IPI3 in a 1:2:2 stoichiometry. The complex interacts (via RIX1) with MDN1 (via its hexameric AAA ATPase ring) and the pre-60S ribosome particles.</text>
</comment>
<comment type="subcellular location">
    <subcellularLocation>
        <location evidence="1">Nucleus</location>
    </subcellularLocation>
</comment>
<comment type="similarity">
    <text evidence="3">Belongs to the IPI1/TEX10 family.</text>
</comment>